<organism>
    <name type="scientific">Picosynechococcus sp. (strain ATCC 27264 / PCC 7002 / PR-6)</name>
    <name type="common">Agmenellum quadruplicatum</name>
    <dbReference type="NCBI Taxonomy" id="32049"/>
    <lineage>
        <taxon>Bacteria</taxon>
        <taxon>Bacillati</taxon>
        <taxon>Cyanobacteriota</taxon>
        <taxon>Cyanophyceae</taxon>
        <taxon>Oscillatoriophycideae</taxon>
        <taxon>Chroococcales</taxon>
        <taxon>Geminocystaceae</taxon>
        <taxon>Picosynechococcus</taxon>
    </lineage>
</organism>
<feature type="chain" id="PRO_1000096851" description="Phosphopantetheine adenylyltransferase">
    <location>
        <begin position="1"/>
        <end position="178"/>
    </location>
</feature>
<feature type="binding site" evidence="1">
    <location>
        <begin position="8"/>
        <end position="9"/>
    </location>
    <ligand>
        <name>ATP</name>
        <dbReference type="ChEBI" id="CHEBI:30616"/>
    </ligand>
</feature>
<feature type="binding site" evidence="1">
    <location>
        <position position="8"/>
    </location>
    <ligand>
        <name>substrate</name>
    </ligand>
</feature>
<feature type="binding site" evidence="1">
    <location>
        <position position="16"/>
    </location>
    <ligand>
        <name>ATP</name>
        <dbReference type="ChEBI" id="CHEBI:30616"/>
    </ligand>
</feature>
<feature type="binding site" evidence="1">
    <location>
        <position position="40"/>
    </location>
    <ligand>
        <name>substrate</name>
    </ligand>
</feature>
<feature type="binding site" evidence="1">
    <location>
        <position position="72"/>
    </location>
    <ligand>
        <name>substrate</name>
    </ligand>
</feature>
<feature type="binding site" evidence="1">
    <location>
        <position position="86"/>
    </location>
    <ligand>
        <name>substrate</name>
    </ligand>
</feature>
<feature type="binding site" evidence="1">
    <location>
        <begin position="87"/>
        <end position="89"/>
    </location>
    <ligand>
        <name>ATP</name>
        <dbReference type="ChEBI" id="CHEBI:30616"/>
    </ligand>
</feature>
<feature type="binding site" evidence="1">
    <location>
        <position position="97"/>
    </location>
    <ligand>
        <name>ATP</name>
        <dbReference type="ChEBI" id="CHEBI:30616"/>
    </ligand>
</feature>
<feature type="binding site" evidence="1">
    <location>
        <begin position="122"/>
        <end position="128"/>
    </location>
    <ligand>
        <name>ATP</name>
        <dbReference type="ChEBI" id="CHEBI:30616"/>
    </ligand>
</feature>
<feature type="site" description="Transition state stabilizer" evidence="1">
    <location>
        <position position="16"/>
    </location>
</feature>
<sequence length="178" mass="19998">MIAIYPGSFDPITLGHLDIIERGDRLFEKVIVAVLCNPSKSPIFSLEKRVAQIRRCTQHLPNVEVASFTGLTTDYARQRNAGVLLRGLRVLSDFEKELQMAHTNKTLWDNIETVFLATSNEYSFLSSSVVKEIAKFGGSVDHLVPDNVAEDLYQWYKVHPPQVSPPTIMPTPQPFIEG</sequence>
<evidence type="ECO:0000255" key="1">
    <source>
        <dbReference type="HAMAP-Rule" id="MF_00151"/>
    </source>
</evidence>
<accession>B1XNE8</accession>
<keyword id="KW-0067">ATP-binding</keyword>
<keyword id="KW-0173">Coenzyme A biosynthesis</keyword>
<keyword id="KW-0963">Cytoplasm</keyword>
<keyword id="KW-0460">Magnesium</keyword>
<keyword id="KW-0547">Nucleotide-binding</keyword>
<keyword id="KW-0548">Nucleotidyltransferase</keyword>
<keyword id="KW-1185">Reference proteome</keyword>
<keyword id="KW-0808">Transferase</keyword>
<reference key="1">
    <citation type="submission" date="2008-02" db="EMBL/GenBank/DDBJ databases">
        <title>Complete sequence of Synechococcus sp. PCC 7002.</title>
        <authorList>
            <person name="Li T."/>
            <person name="Zhao J."/>
            <person name="Zhao C."/>
            <person name="Liu Z."/>
            <person name="Zhao F."/>
            <person name="Marquardt J."/>
            <person name="Nomura C.T."/>
            <person name="Persson S."/>
            <person name="Detter J.C."/>
            <person name="Richardson P.M."/>
            <person name="Lanz C."/>
            <person name="Schuster S.C."/>
            <person name="Wang J."/>
            <person name="Li S."/>
            <person name="Huang X."/>
            <person name="Cai T."/>
            <person name="Yu Z."/>
            <person name="Luo J."/>
            <person name="Zhao J."/>
            <person name="Bryant D.A."/>
        </authorList>
    </citation>
    <scope>NUCLEOTIDE SEQUENCE [LARGE SCALE GENOMIC DNA]</scope>
    <source>
        <strain>ATCC 27264 / PCC 7002 / PR-6</strain>
    </source>
</reference>
<comment type="function">
    <text evidence="1">Reversibly transfers an adenylyl group from ATP to 4'-phosphopantetheine, yielding dephospho-CoA (dPCoA) and pyrophosphate.</text>
</comment>
<comment type="catalytic activity">
    <reaction evidence="1">
        <text>(R)-4'-phosphopantetheine + ATP + H(+) = 3'-dephospho-CoA + diphosphate</text>
        <dbReference type="Rhea" id="RHEA:19801"/>
        <dbReference type="ChEBI" id="CHEBI:15378"/>
        <dbReference type="ChEBI" id="CHEBI:30616"/>
        <dbReference type="ChEBI" id="CHEBI:33019"/>
        <dbReference type="ChEBI" id="CHEBI:57328"/>
        <dbReference type="ChEBI" id="CHEBI:61723"/>
        <dbReference type="EC" id="2.7.7.3"/>
    </reaction>
</comment>
<comment type="cofactor">
    <cofactor evidence="1">
        <name>Mg(2+)</name>
        <dbReference type="ChEBI" id="CHEBI:18420"/>
    </cofactor>
</comment>
<comment type="pathway">
    <text evidence="1">Cofactor biosynthesis; coenzyme A biosynthesis; CoA from (R)-pantothenate: step 4/5.</text>
</comment>
<comment type="subunit">
    <text evidence="1">Homohexamer.</text>
</comment>
<comment type="subcellular location">
    <subcellularLocation>
        <location evidence="1">Cytoplasm</location>
    </subcellularLocation>
</comment>
<comment type="similarity">
    <text evidence="1">Belongs to the bacterial CoaD family.</text>
</comment>
<name>COAD_PICP2</name>
<gene>
    <name evidence="1" type="primary">coaD</name>
    <name type="ordered locus">SYNPCC7002_A0316</name>
</gene>
<proteinExistence type="inferred from homology"/>
<dbReference type="EC" id="2.7.7.3" evidence="1"/>
<dbReference type="EMBL" id="CP000951">
    <property type="protein sequence ID" value="ACA98326.1"/>
    <property type="molecule type" value="Genomic_DNA"/>
</dbReference>
<dbReference type="RefSeq" id="WP_012305950.1">
    <property type="nucleotide sequence ID" value="NZ_JAHHPU010000004.1"/>
</dbReference>
<dbReference type="SMR" id="B1XNE8"/>
<dbReference type="STRING" id="32049.SYNPCC7002_A0316"/>
<dbReference type="KEGG" id="syp:SYNPCC7002_A0316"/>
<dbReference type="eggNOG" id="COG0669">
    <property type="taxonomic scope" value="Bacteria"/>
</dbReference>
<dbReference type="HOGENOM" id="CLU_100149_0_1_3"/>
<dbReference type="UniPathway" id="UPA00241">
    <property type="reaction ID" value="UER00355"/>
</dbReference>
<dbReference type="Proteomes" id="UP000001688">
    <property type="component" value="Chromosome"/>
</dbReference>
<dbReference type="GO" id="GO:0005737">
    <property type="term" value="C:cytoplasm"/>
    <property type="evidence" value="ECO:0007669"/>
    <property type="project" value="UniProtKB-SubCell"/>
</dbReference>
<dbReference type="GO" id="GO:0005524">
    <property type="term" value="F:ATP binding"/>
    <property type="evidence" value="ECO:0007669"/>
    <property type="project" value="UniProtKB-KW"/>
</dbReference>
<dbReference type="GO" id="GO:0004595">
    <property type="term" value="F:pantetheine-phosphate adenylyltransferase activity"/>
    <property type="evidence" value="ECO:0007669"/>
    <property type="project" value="UniProtKB-UniRule"/>
</dbReference>
<dbReference type="GO" id="GO:0015937">
    <property type="term" value="P:coenzyme A biosynthetic process"/>
    <property type="evidence" value="ECO:0007669"/>
    <property type="project" value="UniProtKB-UniRule"/>
</dbReference>
<dbReference type="CDD" id="cd02163">
    <property type="entry name" value="PPAT"/>
    <property type="match status" value="1"/>
</dbReference>
<dbReference type="Gene3D" id="3.40.50.620">
    <property type="entry name" value="HUPs"/>
    <property type="match status" value="1"/>
</dbReference>
<dbReference type="HAMAP" id="MF_00151">
    <property type="entry name" value="PPAT_bact"/>
    <property type="match status" value="1"/>
</dbReference>
<dbReference type="InterPro" id="IPR004821">
    <property type="entry name" value="Cyt_trans-like"/>
</dbReference>
<dbReference type="InterPro" id="IPR001980">
    <property type="entry name" value="PPAT"/>
</dbReference>
<dbReference type="InterPro" id="IPR014729">
    <property type="entry name" value="Rossmann-like_a/b/a_fold"/>
</dbReference>
<dbReference type="NCBIfam" id="TIGR01510">
    <property type="entry name" value="coaD_prev_kdtB"/>
    <property type="match status" value="1"/>
</dbReference>
<dbReference type="NCBIfam" id="TIGR00125">
    <property type="entry name" value="cyt_tran_rel"/>
    <property type="match status" value="1"/>
</dbReference>
<dbReference type="PANTHER" id="PTHR21342">
    <property type="entry name" value="PHOSPHOPANTETHEINE ADENYLYLTRANSFERASE"/>
    <property type="match status" value="1"/>
</dbReference>
<dbReference type="PANTHER" id="PTHR21342:SF1">
    <property type="entry name" value="PHOSPHOPANTETHEINE ADENYLYLTRANSFERASE"/>
    <property type="match status" value="1"/>
</dbReference>
<dbReference type="Pfam" id="PF01467">
    <property type="entry name" value="CTP_transf_like"/>
    <property type="match status" value="1"/>
</dbReference>
<dbReference type="PRINTS" id="PR01020">
    <property type="entry name" value="LPSBIOSNTHSS"/>
</dbReference>
<dbReference type="SUPFAM" id="SSF52374">
    <property type="entry name" value="Nucleotidylyl transferase"/>
    <property type="match status" value="1"/>
</dbReference>
<protein>
    <recommendedName>
        <fullName evidence="1">Phosphopantetheine adenylyltransferase</fullName>
        <ecNumber evidence="1">2.7.7.3</ecNumber>
    </recommendedName>
    <alternativeName>
        <fullName evidence="1">Dephospho-CoA pyrophosphorylase</fullName>
    </alternativeName>
    <alternativeName>
        <fullName evidence="1">Pantetheine-phosphate adenylyltransferase</fullName>
        <shortName evidence="1">PPAT</shortName>
    </alternativeName>
</protein>